<sequence>MKLVRKDIEKDNAGQVTLVPEEPEDMWHTYNLVQVGDSLRASTIRKVQTESSTGSVGSNRVRTTLTLCVEAIDFDSQACQLRVKGTNIQENEYVKMGAYHTIELEPNRQFTLAKKQWDSVVLERIEQACDPAWSADVAAVVMQEGLAHICLVTPSMTLTRAKVEVNIPRKRKGNCSQHDRALERFYEQVVQAIQRHIHFDVVKCVLVASPGFVREQFCDYMFQQAVKTDNKVLLENRSKFLQVHASSGHKYSLKEALCDPTVASRLSDTKAAGEVKALDDFYKMLQHEPDRAFYGLKQVEKANEAMAIDTLLISDELFRHQDVATRSRYVRLVDSVKENAGTVRIFSSLHVSGEQLSQLTGIAAILRFPVPELSDQENDSSSEED</sequence>
<gene>
    <name type="primary">PELO</name>
</gene>
<accession>Q58DV0</accession>
<accession>Q1JPI6</accession>
<feature type="chain" id="PRO_0000232834" description="Protein pelota homolog">
    <location>
        <begin position="1"/>
        <end position="385"/>
    </location>
</feature>
<feature type="modified residue" description="Phosphoserine" evidence="2">
    <location>
        <position position="374"/>
    </location>
</feature>
<feature type="modified residue" description="Phosphoserine" evidence="2">
    <location>
        <position position="380"/>
    </location>
</feature>
<feature type="modified residue" description="Phosphoserine" evidence="2">
    <location>
        <position position="381"/>
    </location>
</feature>
<feature type="modified residue" description="Phosphoserine" evidence="2">
    <location>
        <position position="382"/>
    </location>
</feature>
<feature type="cross-link" description="Glycyl lysine isopeptide (Lys-Gly) (interchain with G-Cter in SUMO2)" evidence="2">
    <location>
        <position position="162"/>
    </location>
</feature>
<feature type="sequence conflict" description="In Ref. 1; ABF57323." evidence="3" ref="1">
    <original>A</original>
    <variation>G</variation>
    <location>
        <position position="192"/>
    </location>
</feature>
<feature type="sequence conflict" description="In Ref. 1; ABF57323." evidence="3" ref="1">
    <original>N</original>
    <variation>D</variation>
    <location>
        <position position="378"/>
    </location>
</feature>
<feature type="sequence conflict" description="In Ref. 1; AAX46344." evidence="3" ref="1">
    <original>D</original>
    <variation>DE</variation>
    <location>
        <position position="385"/>
    </location>
</feature>
<dbReference type="EMBL" id="BT021497">
    <property type="protein sequence ID" value="AAX46344.1"/>
    <property type="molecule type" value="mRNA"/>
</dbReference>
<dbReference type="EMBL" id="BT025367">
    <property type="protein sequence ID" value="ABF57323.1"/>
    <property type="molecule type" value="mRNA"/>
</dbReference>
<dbReference type="RefSeq" id="NP_001029738.1">
    <property type="nucleotide sequence ID" value="NM_001034566.1"/>
</dbReference>
<dbReference type="SMR" id="Q58DV0"/>
<dbReference type="FunCoup" id="Q58DV0">
    <property type="interactions" value="1838"/>
</dbReference>
<dbReference type="STRING" id="9913.ENSBTAP00000004233"/>
<dbReference type="PaxDb" id="9913-ENSBTAP00000004233"/>
<dbReference type="GeneID" id="528728"/>
<dbReference type="KEGG" id="bta:528728"/>
<dbReference type="CTD" id="53918"/>
<dbReference type="eggNOG" id="KOG2869">
    <property type="taxonomic scope" value="Eukaryota"/>
</dbReference>
<dbReference type="HOGENOM" id="CLU_023334_3_1_1"/>
<dbReference type="InParanoid" id="Q58DV0"/>
<dbReference type="OMA" id="DDLWHLK"/>
<dbReference type="OrthoDB" id="10249111at2759"/>
<dbReference type="TreeFam" id="TF105733"/>
<dbReference type="Proteomes" id="UP000009136">
    <property type="component" value="Unplaced"/>
</dbReference>
<dbReference type="GO" id="GO:0005737">
    <property type="term" value="C:cytoplasm"/>
    <property type="evidence" value="ECO:0000318"/>
    <property type="project" value="GO_Central"/>
</dbReference>
<dbReference type="GO" id="GO:1990533">
    <property type="term" value="C:Dom34-Hbs1 complex"/>
    <property type="evidence" value="ECO:0000250"/>
    <property type="project" value="UniProtKB"/>
</dbReference>
<dbReference type="GO" id="GO:0046872">
    <property type="term" value="F:metal ion binding"/>
    <property type="evidence" value="ECO:0007669"/>
    <property type="project" value="UniProtKB-KW"/>
</dbReference>
<dbReference type="GO" id="GO:0043022">
    <property type="term" value="F:ribosome binding"/>
    <property type="evidence" value="ECO:0000250"/>
    <property type="project" value="UniProtKB"/>
</dbReference>
<dbReference type="GO" id="GO:0070651">
    <property type="term" value="P:nonfunctional rRNA decay"/>
    <property type="evidence" value="ECO:0000318"/>
    <property type="project" value="GO_Central"/>
</dbReference>
<dbReference type="GO" id="GO:0070966">
    <property type="term" value="P:nuclear-transcribed mRNA catabolic process, no-go decay"/>
    <property type="evidence" value="ECO:0000250"/>
    <property type="project" value="UniProtKB"/>
</dbReference>
<dbReference type="GO" id="GO:0070481">
    <property type="term" value="P:nuclear-transcribed mRNA catabolic process, non-stop decay"/>
    <property type="evidence" value="ECO:0007669"/>
    <property type="project" value="InterPro"/>
</dbReference>
<dbReference type="GO" id="GO:0006417">
    <property type="term" value="P:regulation of translation"/>
    <property type="evidence" value="ECO:0007669"/>
    <property type="project" value="UniProtKB-KW"/>
</dbReference>
<dbReference type="GO" id="GO:0072344">
    <property type="term" value="P:rescue of stalled ribosome"/>
    <property type="evidence" value="ECO:0000250"/>
    <property type="project" value="UniProtKB"/>
</dbReference>
<dbReference type="GO" id="GO:0032790">
    <property type="term" value="P:ribosome disassembly"/>
    <property type="evidence" value="ECO:0000250"/>
    <property type="project" value="UniProtKB"/>
</dbReference>
<dbReference type="GO" id="GO:0071025">
    <property type="term" value="P:RNA surveillance"/>
    <property type="evidence" value="ECO:0007669"/>
    <property type="project" value="InterPro"/>
</dbReference>
<dbReference type="FunFam" id="2.30.30.870:FF:000001">
    <property type="entry name" value="Protein pelota homolog"/>
    <property type="match status" value="1"/>
</dbReference>
<dbReference type="FunFam" id="3.30.1330.30:FF:000008">
    <property type="entry name" value="Protein pelota homolog"/>
    <property type="match status" value="1"/>
</dbReference>
<dbReference type="FunFam" id="3.30.420.60:FF:000002">
    <property type="entry name" value="Protein pelota homolog"/>
    <property type="match status" value="1"/>
</dbReference>
<dbReference type="Gene3D" id="3.30.1330.30">
    <property type="match status" value="1"/>
</dbReference>
<dbReference type="Gene3D" id="3.30.420.60">
    <property type="entry name" value="eRF1 domain 2"/>
    <property type="match status" value="1"/>
</dbReference>
<dbReference type="Gene3D" id="2.30.30.870">
    <property type="entry name" value="Pelota, domain A"/>
    <property type="match status" value="1"/>
</dbReference>
<dbReference type="InterPro" id="IPR042226">
    <property type="entry name" value="eFR1_2_sf"/>
</dbReference>
<dbReference type="InterPro" id="IPR005140">
    <property type="entry name" value="eRF1_1_Pelota"/>
</dbReference>
<dbReference type="InterPro" id="IPR005141">
    <property type="entry name" value="eRF1_2"/>
</dbReference>
<dbReference type="InterPro" id="IPR005142">
    <property type="entry name" value="eRF1_3"/>
</dbReference>
<dbReference type="InterPro" id="IPR038069">
    <property type="entry name" value="Pelota/DOM34_N"/>
</dbReference>
<dbReference type="InterPro" id="IPR029064">
    <property type="entry name" value="Ribosomal_eL30-like_sf"/>
</dbReference>
<dbReference type="InterPro" id="IPR004405">
    <property type="entry name" value="Transl-rel_pelota"/>
</dbReference>
<dbReference type="NCBIfam" id="TIGR00111">
    <property type="entry name" value="pelota"/>
    <property type="match status" value="1"/>
</dbReference>
<dbReference type="PANTHER" id="PTHR10853">
    <property type="entry name" value="PELOTA"/>
    <property type="match status" value="1"/>
</dbReference>
<dbReference type="PANTHER" id="PTHR10853:SF0">
    <property type="entry name" value="PROTEIN PELOTA HOMOLOG"/>
    <property type="match status" value="1"/>
</dbReference>
<dbReference type="Pfam" id="PF03463">
    <property type="entry name" value="eRF1_1"/>
    <property type="match status" value="1"/>
</dbReference>
<dbReference type="Pfam" id="PF03464">
    <property type="entry name" value="eRF1_2"/>
    <property type="match status" value="1"/>
</dbReference>
<dbReference type="Pfam" id="PF03465">
    <property type="entry name" value="eRF1_3"/>
    <property type="match status" value="1"/>
</dbReference>
<dbReference type="SMART" id="SM01194">
    <property type="entry name" value="eRF1_1"/>
    <property type="match status" value="1"/>
</dbReference>
<dbReference type="SUPFAM" id="SSF159065">
    <property type="entry name" value="Dom34/Pelota N-terminal domain-like"/>
    <property type="match status" value="1"/>
</dbReference>
<dbReference type="SUPFAM" id="SSF55315">
    <property type="entry name" value="L30e-like"/>
    <property type="match status" value="1"/>
</dbReference>
<dbReference type="SUPFAM" id="SSF53137">
    <property type="entry name" value="Translational machinery components"/>
    <property type="match status" value="1"/>
</dbReference>
<keyword id="KW-0963">Cytoplasm</keyword>
<keyword id="KW-1017">Isopeptide bond</keyword>
<keyword id="KW-0479">Metal-binding</keyword>
<keyword id="KW-0597">Phosphoprotein</keyword>
<keyword id="KW-1185">Reference proteome</keyword>
<keyword id="KW-0810">Translation regulation</keyword>
<keyword id="KW-0832">Ubl conjugation</keyword>
<protein>
    <recommendedName>
        <fullName>Protein pelota homolog</fullName>
    </recommendedName>
</protein>
<comment type="function">
    <text evidence="2">Component of the Pelota-HBS1L complex, a complex that recognizes stalled ribosomes and triggers the No-Go Decay (NGD) pathway. In the Pelota-HBS1L complex, PELO recognizes ribosomes stalled at the 3' end of an mRNA and engages stalled ribosomes by destabilizing mRNA in the mRNA channel. Following mRNA extraction from stalled ribosomes by the SKI complex, the Pelota-HBS1L complex promotes recruitment of ABCE1, which drives the disassembly of stalled ribosomes, followed by degradation of damaged mRNAs as part of the NGD pathway. As part of the PINK1-regulated signaling, upon mitochondrial damage is recruited to the ribosome/mRNA-ribonucleoprotein complex associated to mitochondrial outer membrane thereby enabling the recruitment of autophagy receptors and induction of mitophagy.</text>
</comment>
<comment type="cofactor">
    <cofactor evidence="1">
        <name>a divalent metal cation</name>
        <dbReference type="ChEBI" id="CHEBI:60240"/>
    </cofactor>
</comment>
<comment type="subunit">
    <text evidence="2">Component of the Pelota-HBS1L complex, also named Dom34-Hbs1 complex, composed of PELO and HBS1L. Interacts with PINK1. Interacts with ABCE1. Interacts with CNOT4.</text>
</comment>
<comment type="subcellular location">
    <subcellularLocation>
        <location evidence="2">Cytoplasm</location>
    </subcellularLocation>
</comment>
<comment type="similarity">
    <text evidence="3">Belongs to the eukaryotic release factor 1 family. Pelota subfamily.</text>
</comment>
<evidence type="ECO:0000250" key="1">
    <source>
        <dbReference type="UniProtKB" id="P33309"/>
    </source>
</evidence>
<evidence type="ECO:0000250" key="2">
    <source>
        <dbReference type="UniProtKB" id="Q9BRX2"/>
    </source>
</evidence>
<evidence type="ECO:0000305" key="3"/>
<proteinExistence type="evidence at transcript level"/>
<reference key="1">
    <citation type="journal article" date="2005" name="BMC Genomics">
        <title>Characterization of 954 bovine full-CDS cDNA sequences.</title>
        <authorList>
            <person name="Harhay G.P."/>
            <person name="Sonstegard T.S."/>
            <person name="Keele J.W."/>
            <person name="Heaton M.P."/>
            <person name="Clawson M.L."/>
            <person name="Snelling W.M."/>
            <person name="Wiedmann R.T."/>
            <person name="Van Tassell C.P."/>
            <person name="Smith T.P.L."/>
        </authorList>
    </citation>
    <scope>NUCLEOTIDE SEQUENCE [LARGE SCALE MRNA]</scope>
</reference>
<name>PELO_BOVIN</name>
<organism>
    <name type="scientific">Bos taurus</name>
    <name type="common">Bovine</name>
    <dbReference type="NCBI Taxonomy" id="9913"/>
    <lineage>
        <taxon>Eukaryota</taxon>
        <taxon>Metazoa</taxon>
        <taxon>Chordata</taxon>
        <taxon>Craniata</taxon>
        <taxon>Vertebrata</taxon>
        <taxon>Euteleostomi</taxon>
        <taxon>Mammalia</taxon>
        <taxon>Eutheria</taxon>
        <taxon>Laurasiatheria</taxon>
        <taxon>Artiodactyla</taxon>
        <taxon>Ruminantia</taxon>
        <taxon>Pecora</taxon>
        <taxon>Bovidae</taxon>
        <taxon>Bovinae</taxon>
        <taxon>Bos</taxon>
    </lineage>
</organism>